<dbReference type="EMBL" id="X63797">
    <property type="protein sequence ID" value="CAA45318.1"/>
    <property type="molecule type" value="mRNA"/>
</dbReference>
<dbReference type="PIR" id="S24317">
    <property type="entry name" value="S24317"/>
</dbReference>
<dbReference type="RefSeq" id="NP_001025918.1">
    <property type="nucleotide sequence ID" value="NM_001030747.2"/>
</dbReference>
<dbReference type="SMR" id="P28675"/>
<dbReference type="FunCoup" id="P28675">
    <property type="interactions" value="1173"/>
</dbReference>
<dbReference type="STRING" id="9031.ENSGALP00000062069"/>
<dbReference type="GlyCosmos" id="P28675">
    <property type="glycosylation" value="3 sites, No reported glycans"/>
</dbReference>
<dbReference type="GlyGen" id="P28675">
    <property type="glycosylation" value="3 sites"/>
</dbReference>
<dbReference type="PaxDb" id="9031-ENSGALP00000018373"/>
<dbReference type="GeneID" id="417892"/>
<dbReference type="KEGG" id="gga:417892"/>
<dbReference type="CTD" id="1634"/>
<dbReference type="VEuPathDB" id="HostDB:geneid_417892"/>
<dbReference type="eggNOG" id="KOG0619">
    <property type="taxonomic scope" value="Eukaryota"/>
</dbReference>
<dbReference type="InParanoid" id="P28675"/>
<dbReference type="OrthoDB" id="1111193at2759"/>
<dbReference type="PhylomeDB" id="P28675"/>
<dbReference type="PRO" id="PR:P28675"/>
<dbReference type="Proteomes" id="UP000000539">
    <property type="component" value="Unassembled WGS sequence"/>
</dbReference>
<dbReference type="GO" id="GO:0005615">
    <property type="term" value="C:extracellular space"/>
    <property type="evidence" value="ECO:0000318"/>
    <property type="project" value="GO_Central"/>
</dbReference>
<dbReference type="FunFam" id="3.80.10.10:FF:000038">
    <property type="entry name" value="Biglycan"/>
    <property type="match status" value="1"/>
</dbReference>
<dbReference type="Gene3D" id="3.80.10.10">
    <property type="entry name" value="Ribonuclease Inhibitor"/>
    <property type="match status" value="1"/>
</dbReference>
<dbReference type="InterPro" id="IPR001611">
    <property type="entry name" value="Leu-rich_rpt"/>
</dbReference>
<dbReference type="InterPro" id="IPR003591">
    <property type="entry name" value="Leu-rich_rpt_typical-subtyp"/>
</dbReference>
<dbReference type="InterPro" id="IPR032675">
    <property type="entry name" value="LRR_dom_sf"/>
</dbReference>
<dbReference type="InterPro" id="IPR000372">
    <property type="entry name" value="LRRNT"/>
</dbReference>
<dbReference type="InterPro" id="IPR050333">
    <property type="entry name" value="SLRP"/>
</dbReference>
<dbReference type="InterPro" id="IPR016352">
    <property type="entry name" value="SLRP_I_decor/aspor/byglycan"/>
</dbReference>
<dbReference type="PANTHER" id="PTHR45712">
    <property type="entry name" value="AGAP008170-PA"/>
    <property type="match status" value="1"/>
</dbReference>
<dbReference type="PANTHER" id="PTHR45712:SF14">
    <property type="entry name" value="DECORIN"/>
    <property type="match status" value="1"/>
</dbReference>
<dbReference type="Pfam" id="PF13855">
    <property type="entry name" value="LRR_8"/>
    <property type="match status" value="3"/>
</dbReference>
<dbReference type="Pfam" id="PF01462">
    <property type="entry name" value="LRRNT"/>
    <property type="match status" value="1"/>
</dbReference>
<dbReference type="PIRSF" id="PIRSF002490">
    <property type="entry name" value="SLRP_I"/>
    <property type="match status" value="1"/>
</dbReference>
<dbReference type="SMART" id="SM00364">
    <property type="entry name" value="LRR_BAC"/>
    <property type="match status" value="4"/>
</dbReference>
<dbReference type="SMART" id="SM00365">
    <property type="entry name" value="LRR_SD22"/>
    <property type="match status" value="5"/>
</dbReference>
<dbReference type="SMART" id="SM00369">
    <property type="entry name" value="LRR_TYP"/>
    <property type="match status" value="7"/>
</dbReference>
<dbReference type="SMART" id="SM00013">
    <property type="entry name" value="LRRNT"/>
    <property type="match status" value="1"/>
</dbReference>
<dbReference type="SUPFAM" id="SSF52058">
    <property type="entry name" value="L domain-like"/>
    <property type="match status" value="1"/>
</dbReference>
<dbReference type="PROSITE" id="PS51450">
    <property type="entry name" value="LRR"/>
    <property type="match status" value="7"/>
</dbReference>
<organism>
    <name type="scientific">Gallus gallus</name>
    <name type="common">Chicken</name>
    <dbReference type="NCBI Taxonomy" id="9031"/>
    <lineage>
        <taxon>Eukaryota</taxon>
        <taxon>Metazoa</taxon>
        <taxon>Chordata</taxon>
        <taxon>Craniata</taxon>
        <taxon>Vertebrata</taxon>
        <taxon>Euteleostomi</taxon>
        <taxon>Archelosauria</taxon>
        <taxon>Archosauria</taxon>
        <taxon>Dinosauria</taxon>
        <taxon>Saurischia</taxon>
        <taxon>Theropoda</taxon>
        <taxon>Coelurosauria</taxon>
        <taxon>Aves</taxon>
        <taxon>Neognathae</taxon>
        <taxon>Galloanserae</taxon>
        <taxon>Galliformes</taxon>
        <taxon>Phasianidae</taxon>
        <taxon>Phasianinae</taxon>
        <taxon>Gallus</taxon>
    </lineage>
</organism>
<comment type="function">
    <text evidence="1">May affect the rate of fibrils formation.</text>
</comment>
<comment type="subunit">
    <text evidence="1">Binds to type I and type II collagen, to fibronectin and TGF-beta. Forms a ternary complex with MFAP2 and ELN (By similarity).</text>
</comment>
<comment type="subcellular location">
    <subcellularLocation>
        <location evidence="1">Secreted</location>
        <location evidence="1">Extracellular space</location>
        <location evidence="1">Extracellular matrix</location>
    </subcellularLocation>
</comment>
<comment type="PTM">
    <text evidence="1">The attached glycosaminoglycan chain can be either chondroitin sulfate or dermatan sulfate depending upon the tissue of origin.</text>
</comment>
<comment type="similarity">
    <text evidence="4">Belongs to the small leucine-rich proteoglycan (SLRP) family. SLRP class I subfamily.</text>
</comment>
<accession>P28675</accession>
<evidence type="ECO:0000250" key="1"/>
<evidence type="ECO:0000250" key="2">
    <source>
        <dbReference type="UniProtKB" id="Q01129"/>
    </source>
</evidence>
<evidence type="ECO:0000255" key="3"/>
<evidence type="ECO:0000305" key="4"/>
<proteinExistence type="evidence at protein level"/>
<protein>
    <recommendedName>
        <fullName>Decorin</fullName>
    </recommendedName>
    <alternativeName>
        <fullName>Bone proteoglycan II</fullName>
    </alternativeName>
    <alternativeName>
        <fullName>PG-S2</fullName>
    </alternativeName>
</protein>
<name>PGS2_CHICK</name>
<feature type="signal peptide" evidence="2">
    <location>
        <begin position="1"/>
        <end position="16"/>
    </location>
</feature>
<feature type="propeptide" id="PRO_0000032723" evidence="2">
    <location>
        <begin position="17"/>
        <end position="30"/>
    </location>
</feature>
<feature type="chain" id="PRO_0000032724" description="Decorin">
    <location>
        <begin position="31"/>
        <end position="357"/>
    </location>
</feature>
<feature type="repeat" description="LRR 1">
    <location>
        <begin position="71"/>
        <end position="91"/>
    </location>
</feature>
<feature type="repeat" description="LRR 2">
    <location>
        <begin position="92"/>
        <end position="115"/>
    </location>
</feature>
<feature type="repeat" description="LRR 3">
    <location>
        <begin position="116"/>
        <end position="139"/>
    </location>
</feature>
<feature type="repeat" description="LRR 4">
    <location>
        <begin position="140"/>
        <end position="160"/>
    </location>
</feature>
<feature type="repeat" description="LRR 5">
    <location>
        <begin position="161"/>
        <end position="184"/>
    </location>
</feature>
<feature type="repeat" description="LRR 6">
    <location>
        <begin position="185"/>
        <end position="210"/>
    </location>
</feature>
<feature type="repeat" description="LRR 7">
    <location>
        <begin position="211"/>
        <end position="231"/>
    </location>
</feature>
<feature type="repeat" description="LRR 8">
    <location>
        <begin position="232"/>
        <end position="255"/>
    </location>
</feature>
<feature type="repeat" description="LRR 9">
    <location>
        <begin position="256"/>
        <end position="279"/>
    </location>
</feature>
<feature type="repeat" description="LRR 10">
    <location>
        <begin position="280"/>
        <end position="302"/>
    </location>
</feature>
<feature type="repeat" description="LRR 11">
    <location>
        <begin position="303"/>
        <end position="332"/>
    </location>
</feature>
<feature type="repeat" description="LRR 12">
    <location>
        <begin position="333"/>
        <end position="357"/>
    </location>
</feature>
<feature type="glycosylation site" description="O-linked (Xyl...) (glycosaminoglycan) serine" evidence="3">
    <location>
        <position position="46"/>
    </location>
</feature>
<feature type="glycosylation site" description="N-linked (GlcNAc...) asparagine" evidence="3">
    <location>
        <position position="209"/>
    </location>
</feature>
<feature type="glycosylation site" description="N-linked (GlcNAc...) asparagine" evidence="3">
    <location>
        <position position="260"/>
    </location>
</feature>
<feature type="disulfide bond" evidence="1">
    <location>
        <begin position="52"/>
        <end position="58"/>
    </location>
</feature>
<feature type="disulfide bond" evidence="1">
    <location>
        <begin position="56"/>
        <end position="65"/>
    </location>
</feature>
<feature type="disulfide bond" evidence="1">
    <location>
        <begin position="311"/>
        <end position="344"/>
    </location>
</feature>
<gene>
    <name type="primary">DCN</name>
</gene>
<keyword id="KW-0903">Direct protein sequencing</keyword>
<keyword id="KW-1015">Disulfide bond</keyword>
<keyword id="KW-0272">Extracellular matrix</keyword>
<keyword id="KW-0325">Glycoprotein</keyword>
<keyword id="KW-0433">Leucine-rich repeat</keyword>
<keyword id="KW-0654">Proteoglycan</keyword>
<keyword id="KW-1185">Reference proteome</keyword>
<keyword id="KW-0677">Repeat</keyword>
<keyword id="KW-0964">Secreted</keyword>
<keyword id="KW-0732">Signal</keyword>
<reference key="1">
    <citation type="journal article" date="1992" name="Arch. Biochem. Biophys.">
        <title>cDNA clone to chick corneal chondroitin/dermatan sulfate proteoglycan reveals identity to decorin.</title>
        <authorList>
            <person name="Li W."/>
            <person name="Vergnes J.-P."/>
            <person name="Cornuet P.K."/>
            <person name="Hassell J.R."/>
        </authorList>
    </citation>
    <scope>NUCLEOTIDE SEQUENCE [MRNA]</scope>
    <scope>PARTIAL PROTEIN SEQUENCE</scope>
    <source>
        <strain>White leghorn</strain>
        <tissue>Cornea</tissue>
    </source>
</reference>
<sequence>MRLVLLFVLLLPVCLATRFHQKGLFDFMIEDEGSADMAPTDDPVISGFGPVCPFRCQCHLRVVQCSDLGLERVPKDLPPDTTLLDLQNNKITEIKEGDFKNLKNLHALILVNNKISKISPAAFAPLKKLERLYLSKNNLKELPENMPKSLQEIRAHENEISKLRKAVFNGLNQVIVLELGTNPLKSSGIENGAFQGMKRLSYIRIADTNITSIPKGLPPSLTELHLDGNKISKIDAEGLSGLTNLAKLGLSFNSISSVENGSLNNVPHLRELHLNNNELVRVPSGLGEHKYIQVVYLHNNKIASIGINDFCPLGYNTKKATYSGVSLFSNPVQYWEIQPSAFRCIHERSAVQIGNYK</sequence>